<dbReference type="EC" id="1.1.1.-" evidence="1"/>
<dbReference type="EC" id="1.1.1.14" evidence="1"/>
<dbReference type="EC" id="1.1.1.9" evidence="1"/>
<dbReference type="EMBL" id="CR860908">
    <property type="protein sequence ID" value="CAH93013.1"/>
    <property type="molecule type" value="mRNA"/>
</dbReference>
<dbReference type="RefSeq" id="NP_001126780.1">
    <property type="nucleotide sequence ID" value="NM_001133308.1"/>
</dbReference>
<dbReference type="SMR" id="Q5R5F3"/>
<dbReference type="FunCoup" id="Q5R5F3">
    <property type="interactions" value="663"/>
</dbReference>
<dbReference type="STRING" id="9601.ENSPPYP00000007292"/>
<dbReference type="GeneID" id="100173784"/>
<dbReference type="KEGG" id="pon:100173784"/>
<dbReference type="CTD" id="6652"/>
<dbReference type="eggNOG" id="KOG0024">
    <property type="taxonomic scope" value="Eukaryota"/>
</dbReference>
<dbReference type="InParanoid" id="Q5R5F3"/>
<dbReference type="OrthoDB" id="1879366at2759"/>
<dbReference type="Proteomes" id="UP000001595">
    <property type="component" value="Unplaced"/>
</dbReference>
<dbReference type="GO" id="GO:0031966">
    <property type="term" value="C:mitochondrial membrane"/>
    <property type="evidence" value="ECO:0007669"/>
    <property type="project" value="UniProtKB-SubCell"/>
</dbReference>
<dbReference type="GO" id="GO:0031514">
    <property type="term" value="C:motile cilium"/>
    <property type="evidence" value="ECO:0000250"/>
    <property type="project" value="UniProtKB"/>
</dbReference>
<dbReference type="GO" id="GO:0046526">
    <property type="term" value="F:D-xylulose reductase activity"/>
    <property type="evidence" value="ECO:0007669"/>
    <property type="project" value="UniProtKB-EC"/>
</dbReference>
<dbReference type="GO" id="GO:0003939">
    <property type="term" value="F:L-iditol 2-dehydrogenase (NAD+) activity"/>
    <property type="evidence" value="ECO:0007669"/>
    <property type="project" value="UniProtKB-EC"/>
</dbReference>
<dbReference type="GO" id="GO:0008270">
    <property type="term" value="F:zinc ion binding"/>
    <property type="evidence" value="ECO:0007669"/>
    <property type="project" value="InterPro"/>
</dbReference>
<dbReference type="GO" id="GO:0030317">
    <property type="term" value="P:flagellated sperm motility"/>
    <property type="evidence" value="ECO:0000250"/>
    <property type="project" value="UniProtKB"/>
</dbReference>
<dbReference type="GO" id="GO:0006062">
    <property type="term" value="P:sorbitol catabolic process"/>
    <property type="evidence" value="ECO:0007669"/>
    <property type="project" value="TreeGrafter"/>
</dbReference>
<dbReference type="CDD" id="cd05285">
    <property type="entry name" value="sorbitol_DH"/>
    <property type="match status" value="1"/>
</dbReference>
<dbReference type="FunFam" id="3.40.50.720:FF:000068">
    <property type="entry name" value="Sorbitol dehydrogenase"/>
    <property type="match status" value="1"/>
</dbReference>
<dbReference type="Gene3D" id="3.90.180.10">
    <property type="entry name" value="Medium-chain alcohol dehydrogenases, catalytic domain"/>
    <property type="match status" value="1"/>
</dbReference>
<dbReference type="Gene3D" id="3.40.50.720">
    <property type="entry name" value="NAD(P)-binding Rossmann-like Domain"/>
    <property type="match status" value="1"/>
</dbReference>
<dbReference type="InterPro" id="IPR013149">
    <property type="entry name" value="ADH-like_C"/>
</dbReference>
<dbReference type="InterPro" id="IPR013154">
    <property type="entry name" value="ADH-like_N"/>
</dbReference>
<dbReference type="InterPro" id="IPR002328">
    <property type="entry name" value="ADH_Zn_CS"/>
</dbReference>
<dbReference type="InterPro" id="IPR011032">
    <property type="entry name" value="GroES-like_sf"/>
</dbReference>
<dbReference type="InterPro" id="IPR036291">
    <property type="entry name" value="NAD(P)-bd_dom_sf"/>
</dbReference>
<dbReference type="InterPro" id="IPR020843">
    <property type="entry name" value="PKS_ER"/>
</dbReference>
<dbReference type="InterPro" id="IPR045306">
    <property type="entry name" value="SDH-like"/>
</dbReference>
<dbReference type="PANTHER" id="PTHR43161">
    <property type="entry name" value="SORBITOL DEHYDROGENASE"/>
    <property type="match status" value="1"/>
</dbReference>
<dbReference type="PANTHER" id="PTHR43161:SF9">
    <property type="entry name" value="SORBITOL DEHYDROGENASE"/>
    <property type="match status" value="1"/>
</dbReference>
<dbReference type="Pfam" id="PF08240">
    <property type="entry name" value="ADH_N"/>
    <property type="match status" value="1"/>
</dbReference>
<dbReference type="Pfam" id="PF00107">
    <property type="entry name" value="ADH_zinc_N"/>
    <property type="match status" value="1"/>
</dbReference>
<dbReference type="SMART" id="SM00829">
    <property type="entry name" value="PKS_ER"/>
    <property type="match status" value="1"/>
</dbReference>
<dbReference type="SUPFAM" id="SSF50129">
    <property type="entry name" value="GroES-like"/>
    <property type="match status" value="1"/>
</dbReference>
<dbReference type="SUPFAM" id="SSF51735">
    <property type="entry name" value="NAD(P)-binding Rossmann-fold domains"/>
    <property type="match status" value="1"/>
</dbReference>
<dbReference type="PROSITE" id="PS00059">
    <property type="entry name" value="ADH_ZINC"/>
    <property type="match status" value="1"/>
</dbReference>
<sequence>MAAAAKPSNLSLVVHGPGDLRLENYPIPEPGPNEVLLRMHSVGICGSDVHYWEDGRIGNFIVKKPMVLGHEASGTVEKVGSLVKHLKPGDRVAIEPGAPRENDEFCKIGRYNLSPSIFFCATPPDDGNLCRFYKHNAAFCYKLPDNVTFEEGAMIEPLSVGIHACRRGGVTLGHKVLVCGAGPIGMVTLLVAKAMGAAQVVVTDLSATRLSKAKEIGADLVLQISKESPQEIARKVEGLLGCKPEVTIECTGAGASIQAGIYATHSGGTLVLVGLGSEMTTIPLLHAAIREVDIKGVFRYCNTWPVAISMLASKSVNVKPLITHRFPLEKALEAFETFKKGLGLKIMLKCDPNDQNP</sequence>
<keyword id="KW-0007">Acetylation</keyword>
<keyword id="KW-0966">Cell projection</keyword>
<keyword id="KW-0969">Cilium</keyword>
<keyword id="KW-0282">Flagellum</keyword>
<keyword id="KW-0472">Membrane</keyword>
<keyword id="KW-0479">Metal-binding</keyword>
<keyword id="KW-0496">Mitochondrion</keyword>
<keyword id="KW-0520">NAD</keyword>
<keyword id="KW-0560">Oxidoreductase</keyword>
<keyword id="KW-0597">Phosphoprotein</keyword>
<keyword id="KW-1185">Reference proteome</keyword>
<keyword id="KW-0862">Zinc</keyword>
<feature type="initiator methionine" description="Removed" evidence="2">
    <location>
        <position position="1"/>
    </location>
</feature>
<feature type="chain" id="PRO_0000301685" description="Sorbitol dehydrogenase">
    <location>
        <begin position="2"/>
        <end position="357"/>
    </location>
</feature>
<feature type="binding site" evidence="1">
    <location>
        <position position="45"/>
    </location>
    <ligand>
        <name>Zn(2+)</name>
        <dbReference type="ChEBI" id="CHEBI:29105"/>
        <note>catalytic</note>
    </ligand>
</feature>
<feature type="binding site" evidence="1">
    <location>
        <position position="51"/>
    </location>
    <ligand>
        <name>substrate</name>
    </ligand>
</feature>
<feature type="binding site" evidence="1">
    <location>
        <position position="70"/>
    </location>
    <ligand>
        <name>Zn(2+)</name>
        <dbReference type="ChEBI" id="CHEBI:29105"/>
        <note>catalytic</note>
    </ligand>
</feature>
<feature type="binding site" evidence="1">
    <location>
        <position position="71"/>
    </location>
    <ligand>
        <name>Zn(2+)</name>
        <dbReference type="ChEBI" id="CHEBI:29105"/>
        <note>catalytic</note>
    </ligand>
</feature>
<feature type="binding site" evidence="1">
    <location>
        <position position="156"/>
    </location>
    <ligand>
        <name>substrate</name>
    </ligand>
</feature>
<feature type="binding site" evidence="2">
    <location>
        <position position="184"/>
    </location>
    <ligand>
        <name>NAD(+)</name>
        <dbReference type="ChEBI" id="CHEBI:57540"/>
    </ligand>
</feature>
<feature type="binding site" evidence="2">
    <location>
        <position position="204"/>
    </location>
    <ligand>
        <name>NAD(+)</name>
        <dbReference type="ChEBI" id="CHEBI:57540"/>
    </ligand>
</feature>
<feature type="binding site" evidence="2">
    <location>
        <position position="209"/>
    </location>
    <ligand>
        <name>NAD(+)</name>
        <dbReference type="ChEBI" id="CHEBI:57540"/>
    </ligand>
</feature>
<feature type="binding site" evidence="2">
    <location>
        <begin position="273"/>
        <end position="275"/>
    </location>
    <ligand>
        <name>NAD(+)</name>
        <dbReference type="ChEBI" id="CHEBI:57540"/>
    </ligand>
</feature>
<feature type="binding site" evidence="2">
    <location>
        <begin position="297"/>
        <end position="299"/>
    </location>
    <ligand>
        <name>NAD(+)</name>
        <dbReference type="ChEBI" id="CHEBI:57540"/>
    </ligand>
</feature>
<feature type="binding site" evidence="1">
    <location>
        <position position="299"/>
    </location>
    <ligand>
        <name>substrate</name>
    </ligand>
</feature>
<feature type="binding site" evidence="1">
    <location>
        <position position="300"/>
    </location>
    <ligand>
        <name>substrate</name>
    </ligand>
</feature>
<feature type="modified residue" description="N-acetylalanine" evidence="2">
    <location>
        <position position="2"/>
    </location>
</feature>
<feature type="modified residue" description="Phosphoserine" evidence="2">
    <location>
        <position position="211"/>
    </location>
</feature>
<feature type="modified residue" description="Phosphoserine" evidence="2">
    <location>
        <position position="225"/>
    </location>
</feature>
<name>DHSO_PONAB</name>
<gene>
    <name type="primary">SORD</name>
</gene>
<evidence type="ECO:0000250" key="1">
    <source>
        <dbReference type="UniProtKB" id="P07846"/>
    </source>
</evidence>
<evidence type="ECO:0000250" key="2">
    <source>
        <dbReference type="UniProtKB" id="Q00796"/>
    </source>
</evidence>
<evidence type="ECO:0000250" key="3">
    <source>
        <dbReference type="UniProtKB" id="Q64442"/>
    </source>
</evidence>
<evidence type="ECO:0000305" key="4"/>
<accession>Q5R5F3</accession>
<protein>
    <recommendedName>
        <fullName>Sorbitol dehydrogenase</fullName>
        <shortName>SDH</shortName>
        <ecNumber evidence="1">1.1.1.-</ecNumber>
    </recommendedName>
    <alternativeName>
        <fullName>L-iditol 2-dehydrogenase</fullName>
        <ecNumber evidence="1">1.1.1.14</ecNumber>
    </alternativeName>
    <alternativeName>
        <fullName evidence="4">Polyol dehydrogenase</fullName>
    </alternativeName>
    <alternativeName>
        <fullName>Xylitol dehydrogenase</fullName>
        <shortName>XDH</shortName>
        <ecNumber evidence="1">1.1.1.9</ecNumber>
    </alternativeName>
</protein>
<reference key="1">
    <citation type="submission" date="2004-11" db="EMBL/GenBank/DDBJ databases">
        <authorList>
            <consortium name="The German cDNA consortium"/>
        </authorList>
    </citation>
    <scope>NUCLEOTIDE SEQUENCE [LARGE SCALE MRNA]</scope>
    <source>
        <tissue>Kidney</tissue>
    </source>
</reference>
<organism>
    <name type="scientific">Pongo abelii</name>
    <name type="common">Sumatran orangutan</name>
    <name type="synonym">Pongo pygmaeus abelii</name>
    <dbReference type="NCBI Taxonomy" id="9601"/>
    <lineage>
        <taxon>Eukaryota</taxon>
        <taxon>Metazoa</taxon>
        <taxon>Chordata</taxon>
        <taxon>Craniata</taxon>
        <taxon>Vertebrata</taxon>
        <taxon>Euteleostomi</taxon>
        <taxon>Mammalia</taxon>
        <taxon>Eutheria</taxon>
        <taxon>Euarchontoglires</taxon>
        <taxon>Primates</taxon>
        <taxon>Haplorrhini</taxon>
        <taxon>Catarrhini</taxon>
        <taxon>Hominidae</taxon>
        <taxon>Pongo</taxon>
    </lineage>
</organism>
<comment type="function">
    <text evidence="1 2">Polyol dehydrogenase that catalyzes the reversible NAD(+)-dependent oxidation of various sugar alcohols. Is active with xylitol, L-iditol and D-sorbitol (D-glucitol) as substrates, leading to the C2-oxidized products D-xylulose, L-sorbose and D-fructose, respectively (By similarity). Is a key enzyme in the polyol pathway that interconverts glucose and fructose via sorbitol, which constitutes an important alternate route for glucose metabolism. May play a role in sperm motility by using sorbitol as an alternative energy source for sperm motility (By similarity).</text>
</comment>
<comment type="catalytic activity">
    <reaction evidence="1">
        <text>xylitol + NAD(+) = D-xylulose + NADH + H(+)</text>
        <dbReference type="Rhea" id="RHEA:20433"/>
        <dbReference type="ChEBI" id="CHEBI:15378"/>
        <dbReference type="ChEBI" id="CHEBI:17140"/>
        <dbReference type="ChEBI" id="CHEBI:17151"/>
        <dbReference type="ChEBI" id="CHEBI:57540"/>
        <dbReference type="ChEBI" id="CHEBI:57945"/>
        <dbReference type="EC" id="1.1.1.9"/>
    </reaction>
</comment>
<comment type="catalytic activity">
    <reaction evidence="1">
        <text>L-iditol + NAD(+) = keto-L-sorbose + NADH + H(+)</text>
        <dbReference type="Rhea" id="RHEA:10160"/>
        <dbReference type="ChEBI" id="CHEBI:13172"/>
        <dbReference type="ChEBI" id="CHEBI:15378"/>
        <dbReference type="ChEBI" id="CHEBI:18202"/>
        <dbReference type="ChEBI" id="CHEBI:57540"/>
        <dbReference type="ChEBI" id="CHEBI:57945"/>
        <dbReference type="EC" id="1.1.1.14"/>
    </reaction>
</comment>
<comment type="catalytic activity">
    <reaction evidence="1">
        <text>keto-D-fructose + NADH + H(+) = D-sorbitol + NAD(+)</text>
        <dbReference type="Rhea" id="RHEA:33031"/>
        <dbReference type="ChEBI" id="CHEBI:15378"/>
        <dbReference type="ChEBI" id="CHEBI:17924"/>
        <dbReference type="ChEBI" id="CHEBI:48095"/>
        <dbReference type="ChEBI" id="CHEBI:57540"/>
        <dbReference type="ChEBI" id="CHEBI:57945"/>
    </reaction>
</comment>
<comment type="cofactor">
    <cofactor evidence="1">
        <name>Zn(2+)</name>
        <dbReference type="ChEBI" id="CHEBI:29105"/>
    </cofactor>
    <text evidence="1">Binds 1 zinc ion per subunit.</text>
</comment>
<comment type="subunit">
    <text evidence="1">Homotetramer.</text>
</comment>
<comment type="subcellular location">
    <subcellularLocation>
        <location evidence="3">Mitochondrion membrane</location>
        <topology evidence="3">Peripheral membrane protein</topology>
    </subcellularLocation>
    <subcellularLocation>
        <location evidence="3">Cell projection</location>
        <location evidence="3">Cilium</location>
        <location evidence="3">Flagellum</location>
    </subcellularLocation>
    <text evidence="3">Associated with mitochondria of the midpiece and near the plasma membrane in the principal piece of the flagellum. Also found in the epididymosome, secreted by the epididymal epithelium and that transfers proteins from the epididymal fluid to the sperm surface.</text>
</comment>
<comment type="similarity">
    <text evidence="4">Belongs to the zinc-containing alcohol dehydrogenase family.</text>
</comment>
<proteinExistence type="evidence at transcript level"/>